<reference key="1">
    <citation type="submission" date="2005-09" db="EMBL/GenBank/DDBJ databases">
        <title>Annotation of the Aspergillus terreus NIH2624 genome.</title>
        <authorList>
            <person name="Birren B.W."/>
            <person name="Lander E.S."/>
            <person name="Galagan J.E."/>
            <person name="Nusbaum C."/>
            <person name="Devon K."/>
            <person name="Henn M."/>
            <person name="Ma L.-J."/>
            <person name="Jaffe D.B."/>
            <person name="Butler J."/>
            <person name="Alvarez P."/>
            <person name="Gnerre S."/>
            <person name="Grabherr M."/>
            <person name="Kleber M."/>
            <person name="Mauceli E.W."/>
            <person name="Brockman W."/>
            <person name="Rounsley S."/>
            <person name="Young S.K."/>
            <person name="LaButti K."/>
            <person name="Pushparaj V."/>
            <person name="DeCaprio D."/>
            <person name="Crawford M."/>
            <person name="Koehrsen M."/>
            <person name="Engels R."/>
            <person name="Montgomery P."/>
            <person name="Pearson M."/>
            <person name="Howarth C."/>
            <person name="Larson L."/>
            <person name="Luoma S."/>
            <person name="White J."/>
            <person name="Alvarado L."/>
            <person name="Kodira C.D."/>
            <person name="Zeng Q."/>
            <person name="Oleary S."/>
            <person name="Yandava C."/>
            <person name="Denning D.W."/>
            <person name="Nierman W.C."/>
            <person name="Milne T."/>
            <person name="Madden K."/>
        </authorList>
    </citation>
    <scope>NUCLEOTIDE SEQUENCE [LARGE SCALE GENOMIC DNA]</scope>
    <source>
        <strain>NIH 2624 / FGSC A1156</strain>
    </source>
</reference>
<accession>Q0CQH1</accession>
<protein>
    <recommendedName>
        <fullName>Nucleolar protein 58</fullName>
    </recommendedName>
</protein>
<name>NOP58_ASPTN</name>
<dbReference type="EMBL" id="CH476598">
    <property type="protein sequence ID" value="EAU35865.1"/>
    <property type="molecule type" value="Genomic_DNA"/>
</dbReference>
<dbReference type="RefSeq" id="XP_001213241.1">
    <property type="nucleotide sequence ID" value="XM_001213241.1"/>
</dbReference>
<dbReference type="SMR" id="Q0CQH1"/>
<dbReference type="STRING" id="341663.Q0CQH1"/>
<dbReference type="EnsemblFungi" id="EAU35865">
    <property type="protein sequence ID" value="EAU35865"/>
    <property type="gene ID" value="ATEG_04063"/>
</dbReference>
<dbReference type="GeneID" id="4318188"/>
<dbReference type="VEuPathDB" id="FungiDB:ATEG_04063"/>
<dbReference type="eggNOG" id="KOG2572">
    <property type="taxonomic scope" value="Eukaryota"/>
</dbReference>
<dbReference type="HOGENOM" id="CLU_015495_5_0_1"/>
<dbReference type="OMA" id="MGMRSNW"/>
<dbReference type="OrthoDB" id="6780543at2759"/>
<dbReference type="Proteomes" id="UP000007963">
    <property type="component" value="Unassembled WGS sequence"/>
</dbReference>
<dbReference type="GO" id="GO:0031428">
    <property type="term" value="C:box C/D methylation guide snoRNP complex"/>
    <property type="evidence" value="ECO:0007669"/>
    <property type="project" value="EnsemblFungi"/>
</dbReference>
<dbReference type="GO" id="GO:0005730">
    <property type="term" value="C:nucleolus"/>
    <property type="evidence" value="ECO:0007669"/>
    <property type="project" value="UniProtKB-SubCell"/>
</dbReference>
<dbReference type="GO" id="GO:0032040">
    <property type="term" value="C:small-subunit processome"/>
    <property type="evidence" value="ECO:0007669"/>
    <property type="project" value="EnsemblFungi"/>
</dbReference>
<dbReference type="GO" id="GO:0030515">
    <property type="term" value="F:snoRNA binding"/>
    <property type="evidence" value="ECO:0007669"/>
    <property type="project" value="InterPro"/>
</dbReference>
<dbReference type="GO" id="GO:0017069">
    <property type="term" value="F:snRNA binding"/>
    <property type="evidence" value="ECO:0007669"/>
    <property type="project" value="EnsemblFungi"/>
</dbReference>
<dbReference type="GO" id="GO:0000494">
    <property type="term" value="P:box C/D sno(s)RNA 3'-end processing"/>
    <property type="evidence" value="ECO:0007669"/>
    <property type="project" value="EnsemblFungi"/>
</dbReference>
<dbReference type="GO" id="GO:0000480">
    <property type="term" value="P:endonucleolytic cleavage in 5'-ETS of tricistronic rRNA transcript (SSU-rRNA, 5.8S rRNA, LSU-rRNA)"/>
    <property type="evidence" value="ECO:0007669"/>
    <property type="project" value="EnsemblFungi"/>
</dbReference>
<dbReference type="GO" id="GO:0000447">
    <property type="term" value="P:endonucleolytic cleavage in ITS1 to separate SSU-rRNA from 5.8S rRNA and LSU-rRNA from tricistronic rRNA transcript (SSU-rRNA, 5.8S rRNA, LSU-rRNA)"/>
    <property type="evidence" value="ECO:0007669"/>
    <property type="project" value="EnsemblFungi"/>
</dbReference>
<dbReference type="GO" id="GO:0000472">
    <property type="term" value="P:endonucleolytic cleavage to generate mature 5'-end of SSU-rRNA from (SSU-rRNA, 5.8S rRNA, LSU-rRNA)"/>
    <property type="evidence" value="ECO:0007669"/>
    <property type="project" value="EnsemblFungi"/>
</dbReference>
<dbReference type="GO" id="GO:1902570">
    <property type="term" value="P:protein localization to nucleolus"/>
    <property type="evidence" value="ECO:0007669"/>
    <property type="project" value="EnsemblFungi"/>
</dbReference>
<dbReference type="GO" id="GO:0000452">
    <property type="term" value="P:snoRNA guided rRNA 2'-O-methylation"/>
    <property type="evidence" value="ECO:0007669"/>
    <property type="project" value="EnsemblFungi"/>
</dbReference>
<dbReference type="FunFam" id="1.10.246.90:FF:000003">
    <property type="entry name" value="Nucleolar protein 58"/>
    <property type="match status" value="1"/>
</dbReference>
<dbReference type="FunFam" id="1.10.287.4070:FF:000001">
    <property type="entry name" value="Probable Nucleolar protein 58"/>
    <property type="match status" value="1"/>
</dbReference>
<dbReference type="Gene3D" id="1.10.287.4070">
    <property type="match status" value="1"/>
</dbReference>
<dbReference type="Gene3D" id="1.10.246.90">
    <property type="entry name" value="Nop domain"/>
    <property type="match status" value="1"/>
</dbReference>
<dbReference type="InterPro" id="IPR045056">
    <property type="entry name" value="Nop56/Nop58"/>
</dbReference>
<dbReference type="InterPro" id="IPR012974">
    <property type="entry name" value="NOP58/56_N"/>
</dbReference>
<dbReference type="InterPro" id="IPR042239">
    <property type="entry name" value="Nop_C"/>
</dbReference>
<dbReference type="InterPro" id="IPR002687">
    <property type="entry name" value="Nop_dom"/>
</dbReference>
<dbReference type="InterPro" id="IPR036070">
    <property type="entry name" value="Nop_dom_sf"/>
</dbReference>
<dbReference type="InterPro" id="IPR012976">
    <property type="entry name" value="NOSIC"/>
</dbReference>
<dbReference type="PANTHER" id="PTHR10894">
    <property type="entry name" value="NUCLEOLAR PROTEIN 5 NUCLEOLAR PROTEIN NOP5 NOP58"/>
    <property type="match status" value="1"/>
</dbReference>
<dbReference type="PANTHER" id="PTHR10894:SF1">
    <property type="entry name" value="NUCLEOLAR PROTEIN 58"/>
    <property type="match status" value="1"/>
</dbReference>
<dbReference type="Pfam" id="PF01798">
    <property type="entry name" value="Nop"/>
    <property type="match status" value="1"/>
</dbReference>
<dbReference type="Pfam" id="PF08156">
    <property type="entry name" value="NOP5NT"/>
    <property type="match status" value="1"/>
</dbReference>
<dbReference type="SMART" id="SM00931">
    <property type="entry name" value="NOSIC"/>
    <property type="match status" value="1"/>
</dbReference>
<dbReference type="SUPFAM" id="SSF89124">
    <property type="entry name" value="Nop domain"/>
    <property type="match status" value="1"/>
</dbReference>
<dbReference type="PROSITE" id="PS51358">
    <property type="entry name" value="NOP"/>
    <property type="match status" value="1"/>
</dbReference>
<gene>
    <name type="primary">nop58</name>
    <name type="ORF">ATEG_04063</name>
</gene>
<keyword id="KW-0539">Nucleus</keyword>
<keyword id="KW-1185">Reference proteome</keyword>
<keyword id="KW-0687">Ribonucleoprotein</keyword>
<keyword id="KW-0690">Ribosome biogenesis</keyword>
<keyword id="KW-0698">rRNA processing</keyword>
<sequence>MTLFILTETSAGYALLKAKDKKLLKRDDLSTETATPEGVSNLLKLKSFQKFDSAATALEEVASLVEGKVTPRLAGLLDEIKDEKKVSLAVADPKLGNAIGKLPGLDIQLVADSTTTDIYRAIREHLPTLIPGLLPQDMSTMSLGLSHSLARHKLKFSPDKIDTMIVQAIALLDDLDKELNNYAMRVKEWYGWHFPELAKILNDNIAYAKLVLKMGMRSNFESADLAEILPEEIEGAVKAAADRSMGTEISQEDLENIQALAEQVVGFSEYRQQLASYLTARMNAIAPNLTALVGELVGARLIAHAGSLTNLSKSPASTLQILGAEKALFRALKTKHDTPKYGLIYHASLIGQATGKNKGKMARVLAAKASLGLRVDALAEWDDDVTEEDKAALGTEARFNLERKLAAMEGKPLKPRGVAIAPNGTPAQPKKFDINEARKYNADADAMVDDEPKSAKKQKKLVEEVQDEEMADANGASDSDSSEEESSKKSKKGKSDLEKMAEKAGLSVKRYQRKLERGEIEFDAEGNPTAVSKKDLKKAKKEAKKASKGDDKKRKRSDEGEGVDNAEKKKKKKKKDE</sequence>
<organism>
    <name type="scientific">Aspergillus terreus (strain NIH 2624 / FGSC A1156)</name>
    <dbReference type="NCBI Taxonomy" id="341663"/>
    <lineage>
        <taxon>Eukaryota</taxon>
        <taxon>Fungi</taxon>
        <taxon>Dikarya</taxon>
        <taxon>Ascomycota</taxon>
        <taxon>Pezizomycotina</taxon>
        <taxon>Eurotiomycetes</taxon>
        <taxon>Eurotiomycetidae</taxon>
        <taxon>Eurotiales</taxon>
        <taxon>Aspergillaceae</taxon>
        <taxon>Aspergillus</taxon>
        <taxon>Aspergillus subgen. Circumdati</taxon>
    </lineage>
</organism>
<comment type="function">
    <text evidence="1">Required for pre-18S rRNA processing. May bind microtubules (By similarity).</text>
</comment>
<comment type="subcellular location">
    <subcellularLocation>
        <location evidence="1">Nucleus</location>
        <location evidence="1">Nucleolus</location>
    </subcellularLocation>
</comment>
<comment type="similarity">
    <text evidence="4">Belongs to the NOP5/NOP56 family.</text>
</comment>
<proteinExistence type="inferred from homology"/>
<feature type="chain" id="PRO_0000350977" description="Nucleolar protein 58">
    <location>
        <begin position="1"/>
        <end position="577"/>
    </location>
</feature>
<feature type="domain" description="Nop" evidence="2">
    <location>
        <begin position="285"/>
        <end position="410"/>
    </location>
</feature>
<feature type="region of interest" description="Disordered" evidence="3">
    <location>
        <begin position="445"/>
        <end position="577"/>
    </location>
</feature>
<feature type="compositionally biased region" description="Basic and acidic residues" evidence="3">
    <location>
        <begin position="485"/>
        <end position="502"/>
    </location>
</feature>
<feature type="compositionally biased region" description="Basic and acidic residues" evidence="3">
    <location>
        <begin position="544"/>
        <end position="559"/>
    </location>
</feature>
<feature type="compositionally biased region" description="Basic residues" evidence="3">
    <location>
        <begin position="568"/>
        <end position="577"/>
    </location>
</feature>
<evidence type="ECO:0000250" key="1"/>
<evidence type="ECO:0000255" key="2">
    <source>
        <dbReference type="PROSITE-ProRule" id="PRU00690"/>
    </source>
</evidence>
<evidence type="ECO:0000256" key="3">
    <source>
        <dbReference type="SAM" id="MobiDB-lite"/>
    </source>
</evidence>
<evidence type="ECO:0000305" key="4"/>